<accession>O07115</accession>
<feature type="chain" id="PRO_0000206051" description="Photosystem I reaction center subunit II">
    <location>
        <begin position="1"/>
        <end position="142"/>
    </location>
</feature>
<keyword id="KW-0602">Photosynthesis</keyword>
<keyword id="KW-0603">Photosystem I</keyword>
<organism>
    <name type="scientific">Mastigocladus laminosus</name>
    <name type="common">Fischerella sp.</name>
    <dbReference type="NCBI Taxonomy" id="83541"/>
    <lineage>
        <taxon>Bacteria</taxon>
        <taxon>Bacillati</taxon>
        <taxon>Cyanobacteriota</taxon>
        <taxon>Cyanophyceae</taxon>
        <taxon>Nostocales</taxon>
        <taxon>Hapalosiphonaceae</taxon>
        <taxon>Mastigocladus</taxon>
    </lineage>
</organism>
<sequence length="142" mass="15820">MAETLSGQTPIFGGSTGGLLKKAEVEEKYAITWTSPKEQVFEMPTGGAAKMRQGQNLLYLARKEQCIALGSQLRRLKITDYKIYRIYPNGETAYIHPADGVFPEKVNPGRQKVRYNDRRIGQNPDPAKLKFSGVATYDAPNP</sequence>
<protein>
    <recommendedName>
        <fullName>Photosystem I reaction center subunit II</fullName>
    </recommendedName>
    <alternativeName>
        <fullName>Photosystem I 16 kDa polypeptide</fullName>
        <shortName>PSI-D</shortName>
    </alternativeName>
</protein>
<dbReference type="EMBL" id="U97518">
    <property type="protein sequence ID" value="AAC64637.1"/>
    <property type="molecule type" value="Genomic_DNA"/>
</dbReference>
<dbReference type="SMR" id="O07115"/>
<dbReference type="GO" id="GO:0009538">
    <property type="term" value="C:photosystem I reaction center"/>
    <property type="evidence" value="ECO:0007669"/>
    <property type="project" value="InterPro"/>
</dbReference>
<dbReference type="GO" id="GO:0015979">
    <property type="term" value="P:photosynthesis"/>
    <property type="evidence" value="ECO:0007669"/>
    <property type="project" value="UniProtKB-KW"/>
</dbReference>
<dbReference type="Gene3D" id="3.30.1470.10">
    <property type="entry name" value="Photosystem I PsaD, reaction center subunit II"/>
    <property type="match status" value="1"/>
</dbReference>
<dbReference type="InterPro" id="IPR003685">
    <property type="entry name" value="PsaD"/>
</dbReference>
<dbReference type="InterPro" id="IPR036579">
    <property type="entry name" value="PsaD_sf"/>
</dbReference>
<dbReference type="PANTHER" id="PTHR31982:SF5">
    <property type="entry name" value="PHOTOSYSTEM I REACTION CENTER SUBUNIT II, CHLOROPLASTIC"/>
    <property type="match status" value="1"/>
</dbReference>
<dbReference type="PANTHER" id="PTHR31982">
    <property type="entry name" value="PHOTOSYSTEM I REACTION CENTER SUBUNIT II-1, CHLOROPLASTIC-RELATED"/>
    <property type="match status" value="1"/>
</dbReference>
<dbReference type="Pfam" id="PF02531">
    <property type="entry name" value="PsaD"/>
    <property type="match status" value="1"/>
</dbReference>
<dbReference type="SUPFAM" id="SSF64234">
    <property type="entry name" value="Photosystem I subunit PsaD"/>
    <property type="match status" value="1"/>
</dbReference>
<gene>
    <name type="primary">psaD</name>
</gene>
<evidence type="ECO:0000305" key="1"/>
<comment type="function">
    <text>PsaD can form complexes with ferredoxin and ferredoxin-oxidoreductase in photosystem I (PS I) reaction center.</text>
</comment>
<comment type="similarity">
    <text evidence="1">Belongs to the PsaD family.</text>
</comment>
<proteinExistence type="inferred from homology"/>
<reference key="1">
    <citation type="online journal article" date="1997" name="Plant Gene Register">
        <title>Molecular cloning of the psaD gene for the 16-Kda subunit of photosystem I from the thermophilic cyanobacterium Mastigocladus laminosus.</title>
        <authorList>
            <person name="Jin P."/>
            <person name="Sun J."/>
            <person name="Nechushtai R."/>
            <person name="Chitnis P.R."/>
        </authorList>
        <locator>PGR97-162</locator>
    </citation>
    <scope>NUCLEOTIDE SEQUENCE [GENOMIC DNA]</scope>
    <source>
        <strain>PCC 7605</strain>
    </source>
</reference>
<name>PSAD_MASLA</name>